<proteinExistence type="evidence at transcript level"/>
<keyword id="KW-0007">Acetylation</keyword>
<keyword id="KW-0963">Cytoplasm</keyword>
<keyword id="KW-0210">Decarboxylase</keyword>
<keyword id="KW-0256">Endoplasmic reticulum</keyword>
<keyword id="KW-0312">Gluconeogenesis</keyword>
<keyword id="KW-0342">GTP-binding</keyword>
<keyword id="KW-0418">Kinase</keyword>
<keyword id="KW-0456">Lyase</keyword>
<keyword id="KW-0464">Manganese</keyword>
<keyword id="KW-0479">Metal-binding</keyword>
<keyword id="KW-0547">Nucleotide-binding</keyword>
<keyword id="KW-0597">Phosphoprotein</keyword>
<keyword id="KW-1185">Reference proteome</keyword>
<keyword id="KW-0808">Transferase</keyword>
<keyword id="KW-0832">Ubl conjugation</keyword>
<organism>
    <name type="scientific">Bos taurus</name>
    <name type="common">Bovine</name>
    <dbReference type="NCBI Taxonomy" id="9913"/>
    <lineage>
        <taxon>Eukaryota</taxon>
        <taxon>Metazoa</taxon>
        <taxon>Chordata</taxon>
        <taxon>Craniata</taxon>
        <taxon>Vertebrata</taxon>
        <taxon>Euteleostomi</taxon>
        <taxon>Mammalia</taxon>
        <taxon>Eutheria</taxon>
        <taxon>Laurasiatheria</taxon>
        <taxon>Artiodactyla</taxon>
        <taxon>Ruminantia</taxon>
        <taxon>Pecora</taxon>
        <taxon>Bovidae</taxon>
        <taxon>Bovinae</taxon>
        <taxon>Bos</taxon>
    </lineage>
</organism>
<reference key="1">
    <citation type="journal article" date="2002" name="Physiol. Genomics">
        <title>Cloning and characterization of bovine cytosolic and mitochondrial PEPCK during transition to lactation.</title>
        <authorList>
            <person name="Agca C."/>
            <person name="Greenfield R.B."/>
            <person name="Hartwell J.R."/>
            <person name="Donkin S.S."/>
        </authorList>
    </citation>
    <scope>NUCLEOTIDE SEQUENCE [MRNA]</scope>
</reference>
<reference key="2">
    <citation type="journal article" date="1990" name="J. Reprod. Fertil. Suppl.">
        <title>Developmental regulation and tissue-specific expression of a chimaeric phosphoenolpyruvate carboxykinase/bovine growth hormone gene in transgenic animals.</title>
        <authorList>
            <person name="McGrane M.M."/>
            <person name="Yun J.S."/>
            <person name="Roesler W.J."/>
            <person name="Park E.A."/>
            <person name="Wagner T.E."/>
            <person name="Hanson R.W."/>
        </authorList>
    </citation>
    <scope>INDUCTION</scope>
</reference>
<evidence type="ECO:0000250" key="1">
    <source>
        <dbReference type="UniProtKB" id="P07379"/>
    </source>
</evidence>
<evidence type="ECO:0000250" key="2">
    <source>
        <dbReference type="UniProtKB" id="P35558"/>
    </source>
</evidence>
<evidence type="ECO:0000250" key="3">
    <source>
        <dbReference type="UniProtKB" id="Q16822"/>
    </source>
</evidence>
<evidence type="ECO:0000250" key="4">
    <source>
        <dbReference type="UniProtKB" id="Q9Z2V4"/>
    </source>
</evidence>
<evidence type="ECO:0000269" key="5">
    <source>
    </source>
</evidence>
<evidence type="ECO:0000305" key="6"/>
<gene>
    <name evidence="2" type="primary">PCK1</name>
    <name type="synonym">PPCK1</name>
</gene>
<feature type="chain" id="PRO_0000103626" description="Phosphoenolpyruvate carboxykinase, cytosolic [GTP]">
    <location>
        <begin position="1"/>
        <end position="622"/>
    </location>
</feature>
<feature type="region of interest" description="Omega-loop" evidence="1">
    <location>
        <begin position="457"/>
        <end position="487"/>
    </location>
</feature>
<feature type="active site" evidence="1">
    <location>
        <position position="288"/>
    </location>
</feature>
<feature type="binding site" evidence="1">
    <location>
        <position position="87"/>
    </location>
    <ligand>
        <name>substrate</name>
    </ligand>
</feature>
<feature type="binding site" evidence="1">
    <location>
        <begin position="235"/>
        <end position="237"/>
    </location>
    <ligand>
        <name>substrate</name>
    </ligand>
</feature>
<feature type="binding site" evidence="1">
    <location>
        <position position="244"/>
    </location>
    <ligand>
        <name>Mn(2+)</name>
        <dbReference type="ChEBI" id="CHEBI:29035"/>
    </ligand>
</feature>
<feature type="binding site" evidence="1">
    <location>
        <position position="264"/>
    </location>
    <ligand>
        <name>Mn(2+)</name>
        <dbReference type="ChEBI" id="CHEBI:29035"/>
    </ligand>
</feature>
<feature type="binding site" evidence="1">
    <location>
        <position position="286"/>
    </location>
    <ligand>
        <name>substrate</name>
    </ligand>
</feature>
<feature type="binding site" evidence="1">
    <location>
        <begin position="287"/>
        <end position="292"/>
    </location>
    <ligand>
        <name>GTP</name>
        <dbReference type="ChEBI" id="CHEBI:37565"/>
    </ligand>
</feature>
<feature type="binding site" evidence="1">
    <location>
        <position position="311"/>
    </location>
    <ligand>
        <name>Mn(2+)</name>
        <dbReference type="ChEBI" id="CHEBI:29035"/>
    </ligand>
</feature>
<feature type="binding site" evidence="1">
    <location>
        <begin position="403"/>
        <end position="405"/>
    </location>
    <ligand>
        <name>substrate</name>
    </ligand>
</feature>
<feature type="binding site" evidence="1">
    <location>
        <position position="405"/>
    </location>
    <ligand>
        <name>GTP</name>
        <dbReference type="ChEBI" id="CHEBI:37565"/>
    </ligand>
</feature>
<feature type="binding site" evidence="1">
    <location>
        <position position="436"/>
    </location>
    <ligand>
        <name>GTP</name>
        <dbReference type="ChEBI" id="CHEBI:37565"/>
    </ligand>
</feature>
<feature type="binding site" evidence="1">
    <location>
        <begin position="530"/>
        <end position="533"/>
    </location>
    <ligand>
        <name>GTP</name>
        <dbReference type="ChEBI" id="CHEBI:37565"/>
    </ligand>
</feature>
<feature type="modified residue" description="Phosphoserine" evidence="2">
    <location>
        <position position="19"/>
    </location>
</feature>
<feature type="modified residue" description="N6-acetyllysine; by p300/EP300" evidence="2">
    <location>
        <position position="70"/>
    </location>
</feature>
<feature type="modified residue" description="N6-acetyllysine; by p300/EP300" evidence="2">
    <location>
        <position position="71"/>
    </location>
</feature>
<feature type="modified residue" description="Phosphoserine" evidence="2">
    <location>
        <position position="90"/>
    </location>
</feature>
<feature type="modified residue" description="N6-acetyllysine; by p300/EP300" evidence="2">
    <location>
        <position position="91"/>
    </location>
</feature>
<feature type="modified residue" description="Phosphoserine" evidence="4">
    <location>
        <position position="118"/>
    </location>
</feature>
<feature type="modified residue" description="Phosphothreonine" evidence="3">
    <location>
        <position position="178"/>
    </location>
</feature>
<feature type="modified residue" description="Phosphoserine" evidence="3">
    <location>
        <position position="286"/>
    </location>
</feature>
<feature type="modified residue" description="N6-acetyllysine" evidence="1">
    <location>
        <position position="473"/>
    </location>
</feature>
<feature type="modified residue" description="N6-acetyllysine" evidence="1">
    <location>
        <position position="521"/>
    </location>
</feature>
<feature type="modified residue" description="N6-acetyllysine; by p300/EP300" evidence="2">
    <location>
        <position position="594"/>
    </location>
</feature>
<sequence>MPPQLSDGLNYSAKIVRGSLDSLPQAVRSFVESSAKLCRPDQVHICDGSEEENRQLLSHMEEEGVIKRLKKYDNCWLALTDPRDVARIESKTVIITREQRDTVPIPKNGLSQLGRWMSEEDFEKAFNIRFPGCMKGRTMYVIPFSMGPLGSPLSKIGIELTDSPYVVTSMRIMTRMGTSVLEALGDGEFVKCLHSVGCPLPLKKPLVNNWACNPELTLIAHLPDRREIISFGSGYGGNSLLGKKCFALRMASRLAKEEGWLAEHMLILGITNPKGQKKYFAAAFPSACGKTNLAMMNPTLPGWKVECVGDDIAWMKFDQQGNLRAINPENGFFGVAPGTSVRTNPNAIKTIQKNTIFTNVAETSDGGVYWEGIDQPLAARVKLISWKGKEWDPKDGEPCAHPNSRFCTPASQCPIIDPDWESPEGVPIEGIIFGGRRPVGVPLVYEALSWQHGVFVGAAMRSEATAAAEYKGKVIMHDPFAMGPFFGYNFGQYLAHWLSMAQRPAAKLPKIFHVNWFRKDKAGRFLWPGFGENSRVLEWMFNRVVGEGGASVTPIGYIPDEDALDLRGLGDVDVKELFHISKEFWEEEVEEIQKYLEEQVNVDLPPEIKNQVLALKQRISQM</sequence>
<accession>Q8HYZ4</accession>
<comment type="function">
    <text evidence="2 4">Cytosolic phosphoenolpyruvate carboxykinase that catalyzes the reversible decarboxylation and phosphorylation of oxaloacetate (OAA) and acts as the rate-limiting enzyme in gluconeogenesis. Regulates cataplerosis and anaplerosis, the processes that control the levels of metabolic intermediates in the citric acid cycle. At low glucose levels, it catalyzes the cataplerotic conversion of oxaloacetate to phosphoenolpyruvate (PEP), the rate-limiting step in the metabolic pathway that produces glucose from lactate and other precursors derived from the citric acid cycle. At high glucose levels, it catalyzes the anaplerotic conversion of phosphoenolpyruvate to oxaloacetate (By similarity). Acts as a regulator of formation and maintenance of memory CD8(+) T-cells: up-regulated in these cells, where it generates phosphoenolpyruvate, via gluconeogenesis. The resultant phosphoenolpyruvate flows to glycogen and pentose phosphate pathway, which is essential for memory CD8(+) T-cells homeostasis (By similarity). In addition to the phosphoenolpyruvate carboxykinase activity, also acts as a protein kinase when phosphorylated at Ser-90: phosphorylation at Ser-90 by AKT1 reduces the binding affinity to oxaloacetate and promotes an atypical serine protein kinase activity using GTP as donor. The protein kinase activity regulates lipogenesis: upon phosphorylation at Ser-90, translocates to the endoplasmic reticulum and catalyzes phosphorylation of INSIG proteins (INSIG1 and INSIG2), thereby disrupting the interaction between INSIG proteins and SCAP and promoting nuclear translocation of SREBP proteins (SREBF1/SREBP1 or SREBF2/SREBP2) and subsequent transcription of downstream lipogenesis-related genes (By similarity).</text>
</comment>
<comment type="catalytic activity">
    <reaction evidence="2">
        <text>oxaloacetate + GTP = phosphoenolpyruvate + GDP + CO2</text>
        <dbReference type="Rhea" id="RHEA:10388"/>
        <dbReference type="ChEBI" id="CHEBI:16452"/>
        <dbReference type="ChEBI" id="CHEBI:16526"/>
        <dbReference type="ChEBI" id="CHEBI:37565"/>
        <dbReference type="ChEBI" id="CHEBI:58189"/>
        <dbReference type="ChEBI" id="CHEBI:58702"/>
        <dbReference type="EC" id="4.1.1.32"/>
    </reaction>
    <physiologicalReaction direction="left-to-right" evidence="2">
        <dbReference type="Rhea" id="RHEA:10389"/>
    </physiologicalReaction>
    <physiologicalReaction direction="right-to-left" evidence="2">
        <dbReference type="Rhea" id="RHEA:10390"/>
    </physiologicalReaction>
</comment>
<comment type="catalytic activity">
    <reaction evidence="2">
        <text>L-seryl-[protein] + GTP = O-phospho-L-seryl-[protein] + GDP + H(+)</text>
        <dbReference type="Rhea" id="RHEA:64020"/>
        <dbReference type="Rhea" id="RHEA-COMP:9863"/>
        <dbReference type="Rhea" id="RHEA-COMP:11604"/>
        <dbReference type="ChEBI" id="CHEBI:15378"/>
        <dbReference type="ChEBI" id="CHEBI:29999"/>
        <dbReference type="ChEBI" id="CHEBI:37565"/>
        <dbReference type="ChEBI" id="CHEBI:58189"/>
        <dbReference type="ChEBI" id="CHEBI:83421"/>
    </reaction>
    <physiologicalReaction direction="left-to-right" evidence="2">
        <dbReference type="Rhea" id="RHEA:64021"/>
    </physiologicalReaction>
</comment>
<comment type="cofactor">
    <cofactor evidence="2">
        <name>Mn(2+)</name>
        <dbReference type="ChEBI" id="CHEBI:29035"/>
    </cofactor>
    <text evidence="2">Binds 1 Mn(2+) ion per subunit.</text>
</comment>
<comment type="activity regulation">
    <text evidence="1 2">Phosphoenolpyruvate carboxykinase activity is regulated by acetylation and glucose levels (By similarity). The anaplerotic conversion of phosphoenolpyruvate to oxaloacetate is improved by PCK1 acetylation on Lys-91 (K91ac), Lys-473 (K473ac) and Lys-521 (K521ac) (By similarity). High glucose concentrations favor PCK1 anaplerotic activity by triggering acetylation on Lys-91 (K91ac). At low glucose levels, SIRT1-mediated deacetylation of Lys-91 promotes the cataplerotic conversion of oxaloacetate to phosphoenolpyruvate. Phosphorylation at Ser-90 reduces the binding affinity to oxaloacetate and converts the enzyme into an atypical protein kinase using GTP as donor (By similarity).</text>
</comment>
<comment type="pathway">
    <text evidence="2">Carbohydrate biosynthesis; gluconeogenesis.</text>
</comment>
<comment type="subunit">
    <text evidence="2">Monomer.</text>
</comment>
<comment type="subcellular location">
    <subcellularLocation>
        <location evidence="2">Cytoplasm</location>
        <location evidence="2">Cytosol</location>
    </subcellularLocation>
    <subcellularLocation>
        <location evidence="2">Endoplasmic reticulum</location>
    </subcellularLocation>
    <text evidence="2">Phosphorylation at Ser-90 promotes translocation to the endoplasmic reticulum.</text>
</comment>
<comment type="induction">
    <text evidence="5">Regulated by insulin, cAMP and dexamethasone.</text>
</comment>
<comment type="PTM">
    <text evidence="2">Acetylated. Lysine acetylation by p300/EP300 is increased on high glucose conditions. Lysine acetylation promotes ubiquitination by UBR5. Acetylation is enhanced in the presence of BAG6. Deacetylated by SIRT2. Deacetylation of Lys-91 is carried out by SIRT1 and depends on PCK1 phosphorylation levels.</text>
</comment>
<comment type="PTM">
    <text evidence="2">Phosphorylated in a GSK3B-mediated pathway; phosphorylation affects the efficiency of SIRT1-mediated deacetylation, and regulates PCK1 ubiquitination and degradation. Phosphorylation at Ser-90 by AKT1 reduces the binding affinity to oxaloacetate and promotes the protein kinase activity: phosphorylated PCK1 translocates to the endoplasmic reticulum, where it phosphorylates INSIG1 and INSIG2.</text>
</comment>
<comment type="PTM">
    <text evidence="2">Ubiquitination by UBR5 leads to proteasomal degradation.</text>
</comment>
<comment type="miscellaneous">
    <text evidence="6">In eukaryotes there are two isozymes: a cytoplasmic one and a mitochondrial one.</text>
</comment>
<comment type="similarity">
    <text evidence="6">Belongs to the phosphoenolpyruvate carboxykinase [GTP] family.</text>
</comment>
<dbReference type="EC" id="4.1.1.32" evidence="2"/>
<dbReference type="EC" id="2.7.11.-" evidence="2"/>
<dbReference type="EMBL" id="AY145503">
    <property type="protein sequence ID" value="AAN61102.1"/>
    <property type="molecule type" value="mRNA"/>
</dbReference>
<dbReference type="RefSeq" id="NP_777162.1">
    <property type="nucleotide sequence ID" value="NM_174737.2"/>
</dbReference>
<dbReference type="SMR" id="Q8HYZ4"/>
<dbReference type="FunCoup" id="Q8HYZ4">
    <property type="interactions" value="232"/>
</dbReference>
<dbReference type="STRING" id="9913.ENSBTAP00000069100"/>
<dbReference type="PaxDb" id="9913-ENSBTAP00000002520"/>
<dbReference type="PeptideAtlas" id="Q8HYZ4"/>
<dbReference type="GeneID" id="282855"/>
<dbReference type="KEGG" id="bta:282855"/>
<dbReference type="CTD" id="5105"/>
<dbReference type="eggNOG" id="KOG3749">
    <property type="taxonomic scope" value="Eukaryota"/>
</dbReference>
<dbReference type="InParanoid" id="Q8HYZ4"/>
<dbReference type="OrthoDB" id="5841594at2759"/>
<dbReference type="UniPathway" id="UPA00138"/>
<dbReference type="Proteomes" id="UP000009136">
    <property type="component" value="Unplaced"/>
</dbReference>
<dbReference type="GO" id="GO:0005829">
    <property type="term" value="C:cytosol"/>
    <property type="evidence" value="ECO:0000250"/>
    <property type="project" value="UniProtKB"/>
</dbReference>
<dbReference type="GO" id="GO:0005783">
    <property type="term" value="C:endoplasmic reticulum"/>
    <property type="evidence" value="ECO:0000250"/>
    <property type="project" value="UniProtKB"/>
</dbReference>
<dbReference type="GO" id="GO:0005739">
    <property type="term" value="C:mitochondrion"/>
    <property type="evidence" value="ECO:0000318"/>
    <property type="project" value="GO_Central"/>
</dbReference>
<dbReference type="GO" id="GO:0005525">
    <property type="term" value="F:GTP binding"/>
    <property type="evidence" value="ECO:0007669"/>
    <property type="project" value="UniProtKB-KW"/>
</dbReference>
<dbReference type="GO" id="GO:0030145">
    <property type="term" value="F:manganese ion binding"/>
    <property type="evidence" value="ECO:0000318"/>
    <property type="project" value="GO_Central"/>
</dbReference>
<dbReference type="GO" id="GO:0004613">
    <property type="term" value="F:phosphoenolpyruvate carboxykinase (GTP) activity"/>
    <property type="evidence" value="ECO:0000250"/>
    <property type="project" value="UniProtKB"/>
</dbReference>
<dbReference type="GO" id="GO:0106264">
    <property type="term" value="F:protein serine kinase activity (using GTP as donor)"/>
    <property type="evidence" value="ECO:0000250"/>
    <property type="project" value="UniProtKB"/>
</dbReference>
<dbReference type="GO" id="GO:0071549">
    <property type="term" value="P:cellular response to dexamethasone stimulus"/>
    <property type="evidence" value="ECO:0000318"/>
    <property type="project" value="GO_Central"/>
</dbReference>
<dbReference type="GO" id="GO:0071333">
    <property type="term" value="P:cellular response to glucose stimulus"/>
    <property type="evidence" value="ECO:0000250"/>
    <property type="project" value="UniProtKB"/>
</dbReference>
<dbReference type="GO" id="GO:0032869">
    <property type="term" value="P:cellular response to insulin stimulus"/>
    <property type="evidence" value="ECO:0000250"/>
    <property type="project" value="UniProtKB"/>
</dbReference>
<dbReference type="GO" id="GO:0006094">
    <property type="term" value="P:gluconeogenesis"/>
    <property type="evidence" value="ECO:0000318"/>
    <property type="project" value="GO_Central"/>
</dbReference>
<dbReference type="GO" id="GO:0046327">
    <property type="term" value="P:glycerol biosynthetic process from pyruvate"/>
    <property type="evidence" value="ECO:0000318"/>
    <property type="project" value="GO_Central"/>
</dbReference>
<dbReference type="GO" id="GO:0070365">
    <property type="term" value="P:hepatocyte differentiation"/>
    <property type="evidence" value="ECO:0000318"/>
    <property type="project" value="GO_Central"/>
</dbReference>
<dbReference type="GO" id="GO:0006107">
    <property type="term" value="P:oxaloacetate metabolic process"/>
    <property type="evidence" value="ECO:0000250"/>
    <property type="project" value="UniProtKB"/>
</dbReference>
<dbReference type="GO" id="GO:0018105">
    <property type="term" value="P:peptidyl-serine phosphorylation"/>
    <property type="evidence" value="ECO:0000250"/>
    <property type="project" value="UniProtKB"/>
</dbReference>
<dbReference type="GO" id="GO:0043382">
    <property type="term" value="P:positive regulation of memory T cell differentiation"/>
    <property type="evidence" value="ECO:0000250"/>
    <property type="project" value="UniProtKB"/>
</dbReference>
<dbReference type="GO" id="GO:0019543">
    <property type="term" value="P:propionate catabolic process"/>
    <property type="evidence" value="ECO:0000318"/>
    <property type="project" value="GO_Central"/>
</dbReference>
<dbReference type="GO" id="GO:0046890">
    <property type="term" value="P:regulation of lipid biosynthetic process"/>
    <property type="evidence" value="ECO:0000250"/>
    <property type="project" value="UniProtKB"/>
</dbReference>
<dbReference type="GO" id="GO:0042594">
    <property type="term" value="P:response to starvation"/>
    <property type="evidence" value="ECO:0000318"/>
    <property type="project" value="GO_Central"/>
</dbReference>
<dbReference type="CDD" id="cd00819">
    <property type="entry name" value="PEPCK_GTP"/>
    <property type="match status" value="1"/>
</dbReference>
<dbReference type="FunFam" id="3.90.228.20:FF:000005">
    <property type="entry name" value="Phosphoenolpyruvate carboxykinase [GTP], mitochondrial"/>
    <property type="match status" value="1"/>
</dbReference>
<dbReference type="FunFam" id="2.170.8.10:FF:000006">
    <property type="entry name" value="Phosphoenolpyruvate carboxykinase, cytosolic [GTP]"/>
    <property type="match status" value="1"/>
</dbReference>
<dbReference type="FunFam" id="3.40.449.10:FF:000003">
    <property type="entry name" value="Phosphoenolpyruvate carboxykinase, cytosolic [GTP]"/>
    <property type="match status" value="1"/>
</dbReference>
<dbReference type="Gene3D" id="3.90.228.20">
    <property type="match status" value="1"/>
</dbReference>
<dbReference type="Gene3D" id="3.40.449.10">
    <property type="entry name" value="Phosphoenolpyruvate Carboxykinase, domain 1"/>
    <property type="match status" value="1"/>
</dbReference>
<dbReference type="Gene3D" id="2.170.8.10">
    <property type="entry name" value="Phosphoenolpyruvate Carboxykinase, domain 2"/>
    <property type="match status" value="1"/>
</dbReference>
<dbReference type="HAMAP" id="MF_00452">
    <property type="entry name" value="PEPCK_GTP"/>
    <property type="match status" value="1"/>
</dbReference>
<dbReference type="InterPro" id="IPR018091">
    <property type="entry name" value="PEP_carboxykin_GTP_CS"/>
</dbReference>
<dbReference type="InterPro" id="IPR013035">
    <property type="entry name" value="PEP_carboxykinase_C"/>
</dbReference>
<dbReference type="InterPro" id="IPR008209">
    <property type="entry name" value="PEP_carboxykinase_GTP"/>
</dbReference>
<dbReference type="InterPro" id="IPR035077">
    <property type="entry name" value="PEP_carboxykinase_GTP_C"/>
</dbReference>
<dbReference type="InterPro" id="IPR035078">
    <property type="entry name" value="PEP_carboxykinase_GTP_N"/>
</dbReference>
<dbReference type="InterPro" id="IPR008210">
    <property type="entry name" value="PEP_carboxykinase_N"/>
</dbReference>
<dbReference type="NCBIfam" id="NF003253">
    <property type="entry name" value="PRK04210.1"/>
    <property type="match status" value="1"/>
</dbReference>
<dbReference type="PANTHER" id="PTHR11561">
    <property type="entry name" value="PHOSPHOENOLPYRUVATE CARBOXYKINASE"/>
    <property type="match status" value="1"/>
</dbReference>
<dbReference type="PANTHER" id="PTHR11561:SF18">
    <property type="entry name" value="PHOSPHOENOLPYRUVATE CARBOXYKINASE, CYTOSOLIC [GTP]"/>
    <property type="match status" value="1"/>
</dbReference>
<dbReference type="Pfam" id="PF00821">
    <property type="entry name" value="PEPCK_GTP"/>
    <property type="match status" value="1"/>
</dbReference>
<dbReference type="Pfam" id="PF17297">
    <property type="entry name" value="PEPCK_N"/>
    <property type="match status" value="1"/>
</dbReference>
<dbReference type="PIRSF" id="PIRSF001348">
    <property type="entry name" value="PEP_carboxykinase_GTP"/>
    <property type="match status" value="1"/>
</dbReference>
<dbReference type="SUPFAM" id="SSF68923">
    <property type="entry name" value="PEP carboxykinase N-terminal domain"/>
    <property type="match status" value="1"/>
</dbReference>
<dbReference type="SUPFAM" id="SSF53795">
    <property type="entry name" value="PEP carboxykinase-like"/>
    <property type="match status" value="1"/>
</dbReference>
<dbReference type="PROSITE" id="PS00505">
    <property type="entry name" value="PEPCK_GTP"/>
    <property type="match status" value="1"/>
</dbReference>
<name>PCKGC_BOVIN</name>
<protein>
    <recommendedName>
        <fullName evidence="6">Phosphoenolpyruvate carboxykinase, cytosolic [GTP]</fullName>
        <shortName>PEPCK-C</shortName>
        <ecNumber evidence="2">4.1.1.32</ecNumber>
    </recommendedName>
    <alternativeName>
        <fullName evidence="6">Serine-protein kinase PCK1</fullName>
        <ecNumber evidence="2">2.7.11.-</ecNumber>
    </alternativeName>
</protein>